<keyword id="KW-0945">Host-virus interaction</keyword>
<keyword id="KW-1185">Reference proteome</keyword>
<keyword id="KW-1233">Viral attachment to host adhesion receptor</keyword>
<keyword id="KW-1161">Viral attachment to host cell</keyword>
<keyword id="KW-1230">Viral tail fiber protein</keyword>
<keyword id="KW-1227">Viral tail protein</keyword>
<keyword id="KW-0946">Virion</keyword>
<keyword id="KW-1160">Virus entry into host cell</keyword>
<organismHost>
    <name type="scientific">Escherichia coli</name>
    <dbReference type="NCBI Taxonomy" id="562"/>
</organismHost>
<comment type="function">
    <text evidence="1">Probable tail fiber protein.</text>
</comment>
<comment type="subcellular location">
    <subcellularLocation>
        <location evidence="1">Virion</location>
    </subcellularLocation>
</comment>
<protein>
    <recommendedName>
        <fullName evidence="1">Probable tail fiber protein</fullName>
    </recommendedName>
    <alternativeName>
        <fullName evidence="1">Gene product 26</fullName>
        <shortName>Gp26</shortName>
    </alternativeName>
</protein>
<dbReference type="EMBL" id="AY216660">
    <property type="protein sequence ID" value="AAP49973.1"/>
    <property type="molecule type" value="Genomic_DNA"/>
</dbReference>
<dbReference type="RefSeq" id="YP_003919.1">
    <property type="nucleotide sequence ID" value="NC_005833.1"/>
</dbReference>
<dbReference type="SMR" id="Q6XQB2"/>
<dbReference type="KEGG" id="vg:2772989"/>
<dbReference type="Proteomes" id="UP000001156">
    <property type="component" value="Genome"/>
</dbReference>
<dbReference type="GO" id="GO:0098024">
    <property type="term" value="C:virus tail, fiber"/>
    <property type="evidence" value="ECO:0007669"/>
    <property type="project" value="UniProtKB-KW"/>
</dbReference>
<dbReference type="GO" id="GO:0098671">
    <property type="term" value="P:adhesion receptor-mediated virion attachment to host cell"/>
    <property type="evidence" value="ECO:0007669"/>
    <property type="project" value="UniProtKB-KW"/>
</dbReference>
<dbReference type="GO" id="GO:0046718">
    <property type="term" value="P:symbiont entry into host cell"/>
    <property type="evidence" value="ECO:0007669"/>
    <property type="project" value="UniProtKB-KW"/>
</dbReference>
<dbReference type="CDD" id="cd19958">
    <property type="entry name" value="pyocin_knob"/>
    <property type="match status" value="1"/>
</dbReference>
<accession>Q6XQB2</accession>
<reference key="1">
    <citation type="journal article" date="2004" name="Virology">
        <title>The genome and proteome of coliphage T1.</title>
        <authorList>
            <person name="Roberts M.D."/>
            <person name="Martin N.L."/>
            <person name="Kropinski A.M."/>
        </authorList>
    </citation>
    <scope>NUCLEOTIDE SEQUENCE [GENOMIC DNA]</scope>
</reference>
<organism evidence="3">
    <name type="scientific">Escherichia phage T1</name>
    <name type="common">Bacteriophage T1</name>
    <dbReference type="NCBI Taxonomy" id="2492962"/>
    <lineage>
        <taxon>Viruses</taxon>
        <taxon>Duplodnaviria</taxon>
        <taxon>Heunggongvirae</taxon>
        <taxon>Uroviricota</taxon>
        <taxon>Caudoviricetes</taxon>
        <taxon>Drexlerviridae</taxon>
        <taxon>Tunavirinae</taxon>
        <taxon>Tunavirus</taxon>
        <taxon>Tunavirus T1</taxon>
    </lineage>
</organism>
<name>FIBER_BPT1</name>
<proteinExistence type="predicted"/>
<feature type="chain" id="PRO_0000432546" description="Probable tail fiber protein">
    <location>
        <begin position="1"/>
        <end position="728"/>
    </location>
</feature>
<evidence type="ECO:0000305" key="1"/>
<evidence type="ECO:0000312" key="2">
    <source>
        <dbReference type="EMBL" id="AAP49973.1"/>
    </source>
</evidence>
<evidence type="ECO:0000312" key="3">
    <source>
        <dbReference type="Proteomes" id="UP000001156"/>
    </source>
</evidence>
<gene>
    <name evidence="2" type="ORF">26</name>
</gene>
<sequence length="728" mass="77958">MALYRRGTASMDADGTVHGTDTKWKDQLALIRVGATIVFLEQPIKLAVISDIVSDTELKAISTDGQTAADGKYVILLNDSLTVNGLAQNVAETLRYYQSKETEIASALDIIADLDMDNLNNIVQEIKSNKSAAEAAQNQAELARDSANSARDESISIKNQTQQISDSAIGSINAAKDKAITNVQQKENSAVTHINSEEAAAIQAINDAKGDLSGYVNDAQTAAQTATSAKNDAQAARDAAVSAKDAAAVSAQEAQDAANSVNADNLLTKDGNLSGLADKEQSKKNLAVNRLNQPRGDLTEIYSNDDRTGFKLIVKDSGDWGAMTHDGSENKALGVNFGGTGGTTEEQARTSLKVYKLDRTNLGEKHLDSITGEGDGPGIYMQSSSALATASRGYPEATAGMLEVLPNGANGASACIQRFTPFTYLGTAPESGNSQNEYARAGRGTFYIRMKNGNNAKFSPWIPFQASSSGNVVSSPASNEKSSWVDYVNALSSQPSSLASYNVNSVGWVTAISVRHRNGQGDGSAFGFVIEDASMTSPHYKDVRLRKQTGAGQWQSTQVIWNTGNTTVDSNGFIKRASPIVDIFGNGSHRTNDESEGCTVERISTGEYLIRGCLSLNSDLAWGGVNGGIEIPKDINGQPILWVDYDVNPDGSLVIKTYHRTHDNAPSFARNHKDGYSDGDPIDIPSDVFVSVRVEMPNDSIYNKKVEECKRNHERMVSGEFVESLKNT</sequence>